<protein>
    <recommendedName>
        <fullName evidence="8 10">Gamma-aminobutyraldehyde dehydrogenase</fullName>
        <shortName evidence="8">ABALDH</shortName>
        <ecNumber evidence="3 7">1.2.1.19</ecNumber>
    </recommendedName>
    <alternativeName>
        <fullName>1-pyrroline dehydrogenase</fullName>
    </alternativeName>
    <alternativeName>
        <fullName>4-aminobutanal dehydrogenase</fullName>
    </alternativeName>
    <alternativeName>
        <fullName evidence="13">5-aminopentanal dehydrogenase</fullName>
        <ecNumber evidence="6 12">1.2.1.-</ecNumber>
    </alternativeName>
</protein>
<name>ABDH_ECOLI</name>
<feature type="chain" id="PRO_0000056563" description="Gamma-aminobutyraldehyde dehydrogenase">
    <location>
        <begin position="1"/>
        <end position="474"/>
    </location>
</feature>
<feature type="active site" evidence="1">
    <location>
        <position position="246"/>
    </location>
</feature>
<feature type="active site" description="Nucleophile" evidence="11">
    <location>
        <position position="280"/>
    </location>
</feature>
<feature type="binding site" evidence="2 15">
    <location>
        <begin position="146"/>
        <end position="148"/>
    </location>
    <ligand>
        <name>NAD(+)</name>
        <dbReference type="ChEBI" id="CHEBI:57540"/>
    </ligand>
</feature>
<feature type="binding site" evidence="2 15">
    <location>
        <begin position="172"/>
        <end position="175"/>
    </location>
    <ligand>
        <name>NAD(+)</name>
        <dbReference type="ChEBI" id="CHEBI:57540"/>
    </ligand>
</feature>
<feature type="binding site" evidence="2 15">
    <location>
        <position position="209"/>
    </location>
    <ligand>
        <name>NAD(+)</name>
        <dbReference type="ChEBI" id="CHEBI:57540"/>
    </ligand>
</feature>
<feature type="binding site" evidence="2 15">
    <location>
        <begin position="225"/>
        <end position="228"/>
    </location>
    <ligand>
        <name>NAD(+)</name>
        <dbReference type="ChEBI" id="CHEBI:57540"/>
    </ligand>
</feature>
<feature type="binding site" evidence="2 15">
    <location>
        <position position="280"/>
    </location>
    <ligand>
        <name>NAD(+)</name>
        <dbReference type="ChEBI" id="CHEBI:57540"/>
    </ligand>
</feature>
<feature type="strand" evidence="16">
    <location>
        <begin position="5"/>
        <end position="7"/>
    </location>
</feature>
<feature type="strand" evidence="16">
    <location>
        <begin position="10"/>
        <end position="12"/>
    </location>
</feature>
<feature type="strand" evidence="16">
    <location>
        <begin position="18"/>
        <end position="22"/>
    </location>
</feature>
<feature type="turn" evidence="16">
    <location>
        <begin position="24"/>
        <end position="26"/>
    </location>
</feature>
<feature type="strand" evidence="16">
    <location>
        <begin position="29"/>
        <end position="34"/>
    </location>
</feature>
<feature type="helix" evidence="16">
    <location>
        <begin position="38"/>
        <end position="55"/>
    </location>
</feature>
<feature type="helix" evidence="16">
    <location>
        <begin position="60"/>
        <end position="76"/>
    </location>
</feature>
<feature type="helix" evidence="16">
    <location>
        <begin position="78"/>
        <end position="89"/>
    </location>
</feature>
<feature type="helix" evidence="16">
    <location>
        <begin position="93"/>
        <end position="98"/>
    </location>
</feature>
<feature type="helix" evidence="16">
    <location>
        <begin position="100"/>
        <end position="114"/>
    </location>
</feature>
<feature type="strand" evidence="16">
    <location>
        <begin position="119"/>
        <end position="121"/>
    </location>
</feature>
<feature type="strand" evidence="16">
    <location>
        <begin position="123"/>
        <end position="127"/>
    </location>
</feature>
<feature type="strand" evidence="16">
    <location>
        <begin position="130"/>
        <end position="138"/>
    </location>
</feature>
<feature type="strand" evidence="16">
    <location>
        <begin position="140"/>
        <end position="145"/>
    </location>
</feature>
<feature type="strand" evidence="16">
    <location>
        <begin position="148"/>
        <end position="150"/>
    </location>
</feature>
<feature type="helix" evidence="16">
    <location>
        <begin position="151"/>
        <end position="164"/>
    </location>
</feature>
<feature type="strand" evidence="16">
    <location>
        <begin position="168"/>
        <end position="172"/>
    </location>
</feature>
<feature type="helix" evidence="16">
    <location>
        <begin position="179"/>
        <end position="188"/>
    </location>
</feature>
<feature type="turn" evidence="16">
    <location>
        <begin position="189"/>
        <end position="191"/>
    </location>
</feature>
<feature type="strand" evidence="16">
    <location>
        <begin position="196"/>
        <end position="199"/>
    </location>
</feature>
<feature type="turn" evidence="16">
    <location>
        <begin position="204"/>
        <end position="207"/>
    </location>
</feature>
<feature type="helix" evidence="16">
    <location>
        <begin position="208"/>
        <end position="212"/>
    </location>
</feature>
<feature type="strand" evidence="16">
    <location>
        <begin position="217"/>
        <end position="224"/>
    </location>
</feature>
<feature type="helix" evidence="16">
    <location>
        <begin position="226"/>
        <end position="236"/>
    </location>
</feature>
<feature type="helix" evidence="16">
    <location>
        <begin position="237"/>
        <end position="239"/>
    </location>
</feature>
<feature type="strand" evidence="16">
    <location>
        <begin position="242"/>
        <end position="246"/>
    </location>
</feature>
<feature type="strand" evidence="16">
    <location>
        <begin position="252"/>
        <end position="255"/>
    </location>
</feature>
<feature type="helix" evidence="16">
    <location>
        <begin position="261"/>
        <end position="271"/>
    </location>
</feature>
<feature type="helix" evidence="16">
    <location>
        <begin position="274"/>
        <end position="277"/>
    </location>
</feature>
<feature type="strand" evidence="16">
    <location>
        <begin position="285"/>
        <end position="289"/>
    </location>
</feature>
<feature type="turn" evidence="16">
    <location>
        <begin position="290"/>
        <end position="292"/>
    </location>
</feature>
<feature type="helix" evidence="16">
    <location>
        <begin position="293"/>
        <end position="305"/>
    </location>
</feature>
<feature type="helix" evidence="16">
    <location>
        <begin position="325"/>
        <end position="340"/>
    </location>
</feature>
<feature type="strand" evidence="16">
    <location>
        <begin position="345"/>
        <end position="348"/>
    </location>
</feature>
<feature type="strand" evidence="16">
    <location>
        <begin position="354"/>
        <end position="357"/>
    </location>
</feature>
<feature type="strand" evidence="16">
    <location>
        <begin position="363"/>
        <end position="366"/>
    </location>
</feature>
<feature type="helix" evidence="16">
    <location>
        <begin position="373"/>
        <end position="376"/>
    </location>
</feature>
<feature type="strand" evidence="16">
    <location>
        <begin position="381"/>
        <end position="389"/>
    </location>
</feature>
<feature type="helix" evidence="16">
    <location>
        <begin position="392"/>
        <end position="400"/>
    </location>
</feature>
<feature type="strand" evidence="16">
    <location>
        <begin position="401"/>
        <end position="403"/>
    </location>
</feature>
<feature type="strand" evidence="16">
    <location>
        <begin position="406"/>
        <end position="411"/>
    </location>
</feature>
<feature type="helix" evidence="16">
    <location>
        <begin position="415"/>
        <end position="424"/>
    </location>
</feature>
<feature type="strand" evidence="16">
    <location>
        <begin position="427"/>
        <end position="433"/>
    </location>
</feature>
<feature type="helix" evidence="16">
    <location>
        <begin position="448"/>
        <end position="450"/>
    </location>
</feature>
<feature type="helix" evidence="16">
    <location>
        <begin position="457"/>
        <end position="462"/>
    </location>
</feature>
<feature type="strand" evidence="16">
    <location>
        <begin position="465"/>
        <end position="473"/>
    </location>
</feature>
<proteinExistence type="evidence at protein level"/>
<keyword id="KW-0002">3D-structure</keyword>
<keyword id="KW-0520">NAD</keyword>
<keyword id="KW-0560">Oxidoreductase</keyword>
<keyword id="KW-1185">Reference proteome</keyword>
<dbReference type="EC" id="1.2.1.19" evidence="3 7"/>
<dbReference type="EC" id="1.2.1.-" evidence="6 12"/>
<dbReference type="EMBL" id="U00096">
    <property type="protein sequence ID" value="AAC74526.1"/>
    <property type="molecule type" value="Genomic_DNA"/>
</dbReference>
<dbReference type="EMBL" id="AP009048">
    <property type="protein sequence ID" value="BAA15073.1"/>
    <property type="molecule type" value="Genomic_DNA"/>
</dbReference>
<dbReference type="PIR" id="G64896">
    <property type="entry name" value="G64896"/>
</dbReference>
<dbReference type="RefSeq" id="NP_415961.1">
    <property type="nucleotide sequence ID" value="NC_000913.3"/>
</dbReference>
<dbReference type="RefSeq" id="WP_001163872.1">
    <property type="nucleotide sequence ID" value="NZ_LN832404.1"/>
</dbReference>
<dbReference type="PDB" id="1WNB">
    <property type="method" value="X-ray"/>
    <property type="resolution" value="2.20 A"/>
    <property type="chains" value="A/B/C/D=1-474"/>
</dbReference>
<dbReference type="PDB" id="1WND">
    <property type="method" value="X-ray"/>
    <property type="resolution" value="2.10 A"/>
    <property type="chains" value="A/B/C/D=1-474"/>
</dbReference>
<dbReference type="PDBsum" id="1WNB"/>
<dbReference type="PDBsum" id="1WND"/>
<dbReference type="SMR" id="P77674"/>
<dbReference type="BioGRID" id="4260192">
    <property type="interactions" value="11"/>
</dbReference>
<dbReference type="DIP" id="DIP-11656N"/>
<dbReference type="FunCoup" id="P77674">
    <property type="interactions" value="100"/>
</dbReference>
<dbReference type="IntAct" id="P77674">
    <property type="interactions" value="4"/>
</dbReference>
<dbReference type="STRING" id="511145.b1444"/>
<dbReference type="DrugBank" id="DB04401">
    <property type="generic name" value="Betaine aldehyde"/>
</dbReference>
<dbReference type="jPOST" id="P77674"/>
<dbReference type="PaxDb" id="511145-b1444"/>
<dbReference type="EnsemblBacteria" id="AAC74526">
    <property type="protein sequence ID" value="AAC74526"/>
    <property type="gene ID" value="b1444"/>
</dbReference>
<dbReference type="GeneID" id="945876"/>
<dbReference type="KEGG" id="ecj:JW1439"/>
<dbReference type="KEGG" id="eco:b1444"/>
<dbReference type="KEGG" id="ecoc:C3026_08400"/>
<dbReference type="PATRIC" id="fig|1411691.4.peg.824"/>
<dbReference type="EchoBASE" id="EB3529"/>
<dbReference type="eggNOG" id="COG1012">
    <property type="taxonomic scope" value="Bacteria"/>
</dbReference>
<dbReference type="HOGENOM" id="CLU_005391_1_0_6"/>
<dbReference type="InParanoid" id="P77674"/>
<dbReference type="OMA" id="VRHVMIK"/>
<dbReference type="OrthoDB" id="9812625at2"/>
<dbReference type="PhylomeDB" id="P77674"/>
<dbReference type="BioCyc" id="EcoCyc:G6755-MONOMER"/>
<dbReference type="BioCyc" id="MetaCyc:G6755-MONOMER"/>
<dbReference type="BRENDA" id="1.2.1.19">
    <property type="organism ID" value="2026"/>
</dbReference>
<dbReference type="SABIO-RK" id="P77674"/>
<dbReference type="UniPathway" id="UPA00188">
    <property type="reaction ID" value="UER00292"/>
</dbReference>
<dbReference type="EvolutionaryTrace" id="P77674"/>
<dbReference type="PRO" id="PR:P77674"/>
<dbReference type="Proteomes" id="UP000000625">
    <property type="component" value="Chromosome"/>
</dbReference>
<dbReference type="GO" id="GO:0005829">
    <property type="term" value="C:cytosol"/>
    <property type="evidence" value="ECO:0000314"/>
    <property type="project" value="EcoCyc"/>
</dbReference>
<dbReference type="GO" id="GO:0032991">
    <property type="term" value="C:protein-containing complex"/>
    <property type="evidence" value="ECO:0000314"/>
    <property type="project" value="EcoCyc"/>
</dbReference>
<dbReference type="GO" id="GO:0004029">
    <property type="term" value="F:aldehyde dehydrogenase (NAD+) activity"/>
    <property type="evidence" value="ECO:0000314"/>
    <property type="project" value="EcoCyc"/>
</dbReference>
<dbReference type="GO" id="GO:0019145">
    <property type="term" value="F:aminobutyraldehyde dehydrogenase (NAD+) activity"/>
    <property type="evidence" value="ECO:0000314"/>
    <property type="project" value="EcoCyc"/>
</dbReference>
<dbReference type="GO" id="GO:0042802">
    <property type="term" value="F:identical protein binding"/>
    <property type="evidence" value="ECO:0000314"/>
    <property type="project" value="EcoCyc"/>
</dbReference>
<dbReference type="GO" id="GO:0051287">
    <property type="term" value="F:NAD binding"/>
    <property type="evidence" value="ECO:0007669"/>
    <property type="project" value="UniProtKB-UniRule"/>
</dbReference>
<dbReference type="GO" id="GO:0019477">
    <property type="term" value="P:L-lysine catabolic process"/>
    <property type="evidence" value="ECO:0007669"/>
    <property type="project" value="UniProtKB-UniRule"/>
</dbReference>
<dbReference type="GO" id="GO:0051289">
    <property type="term" value="P:protein homotetramerization"/>
    <property type="evidence" value="ECO:0000314"/>
    <property type="project" value="EcoCyc"/>
</dbReference>
<dbReference type="GO" id="GO:0009447">
    <property type="term" value="P:putrescine catabolic process"/>
    <property type="evidence" value="ECO:0000315"/>
    <property type="project" value="EcoCyc"/>
</dbReference>
<dbReference type="CDD" id="cd07092">
    <property type="entry name" value="ALDH_ABALDH-YdcW"/>
    <property type="match status" value="1"/>
</dbReference>
<dbReference type="FunFam" id="3.40.605.10:FF:000001">
    <property type="entry name" value="Aldehyde dehydrogenase 1"/>
    <property type="match status" value="1"/>
</dbReference>
<dbReference type="FunFam" id="3.40.309.10:FF:000010">
    <property type="entry name" value="Gamma-aminobutyraldehyde dehydrogenase"/>
    <property type="match status" value="1"/>
</dbReference>
<dbReference type="Gene3D" id="3.40.605.10">
    <property type="entry name" value="Aldehyde Dehydrogenase, Chain A, domain 1"/>
    <property type="match status" value="1"/>
</dbReference>
<dbReference type="Gene3D" id="3.40.309.10">
    <property type="entry name" value="Aldehyde Dehydrogenase, Chain A, domain 2"/>
    <property type="match status" value="1"/>
</dbReference>
<dbReference type="HAMAP" id="MF_01275">
    <property type="entry name" value="Aldedh_Prr"/>
    <property type="match status" value="1"/>
</dbReference>
<dbReference type="InterPro" id="IPR016161">
    <property type="entry name" value="Ald_DH/histidinol_DH"/>
</dbReference>
<dbReference type="InterPro" id="IPR016163">
    <property type="entry name" value="Ald_DH_C"/>
</dbReference>
<dbReference type="InterPro" id="IPR029510">
    <property type="entry name" value="Ald_DH_CS_GLU"/>
</dbReference>
<dbReference type="InterPro" id="IPR016162">
    <property type="entry name" value="Ald_DH_N"/>
</dbReference>
<dbReference type="InterPro" id="IPR015590">
    <property type="entry name" value="Aldehyde_DH_dom"/>
</dbReference>
<dbReference type="InterPro" id="IPR015657">
    <property type="entry name" value="Aminobutyraldehyde_DH"/>
</dbReference>
<dbReference type="InterPro" id="IPR017749">
    <property type="entry name" value="PatD"/>
</dbReference>
<dbReference type="NCBIfam" id="TIGR03374">
    <property type="entry name" value="ABALDH"/>
    <property type="match status" value="1"/>
</dbReference>
<dbReference type="NCBIfam" id="NF010000">
    <property type="entry name" value="PRK13473.1"/>
    <property type="match status" value="1"/>
</dbReference>
<dbReference type="PANTHER" id="PTHR11699">
    <property type="entry name" value="ALDEHYDE DEHYDROGENASE-RELATED"/>
    <property type="match status" value="1"/>
</dbReference>
<dbReference type="Pfam" id="PF00171">
    <property type="entry name" value="Aldedh"/>
    <property type="match status" value="1"/>
</dbReference>
<dbReference type="SUPFAM" id="SSF53720">
    <property type="entry name" value="ALDH-like"/>
    <property type="match status" value="1"/>
</dbReference>
<dbReference type="PROSITE" id="PS00687">
    <property type="entry name" value="ALDEHYDE_DEHYDR_GLU"/>
    <property type="match status" value="1"/>
</dbReference>
<evidence type="ECO:0000255" key="1">
    <source>
        <dbReference type="PROSITE-ProRule" id="PRU10007"/>
    </source>
</evidence>
<evidence type="ECO:0000269" key="2">
    <source>
    </source>
</evidence>
<evidence type="ECO:0000269" key="3">
    <source>
    </source>
</evidence>
<evidence type="ECO:0000269" key="4">
    <source>
    </source>
</evidence>
<evidence type="ECO:0000269" key="5">
    <source>
    </source>
</evidence>
<evidence type="ECO:0000269" key="6">
    <source>
    </source>
</evidence>
<evidence type="ECO:0000269" key="7">
    <source>
    </source>
</evidence>
<evidence type="ECO:0000303" key="8">
    <source>
    </source>
</evidence>
<evidence type="ECO:0000303" key="9">
    <source>
    </source>
</evidence>
<evidence type="ECO:0000303" key="10">
    <source>
    </source>
</evidence>
<evidence type="ECO:0000305" key="11"/>
<evidence type="ECO:0000305" key="12">
    <source>
    </source>
</evidence>
<evidence type="ECO:0000305" key="13">
    <source>
    </source>
</evidence>
<evidence type="ECO:0000305" key="14">
    <source>
    </source>
</evidence>
<evidence type="ECO:0007744" key="15">
    <source>
        <dbReference type="PDB" id="1WNB"/>
    </source>
</evidence>
<evidence type="ECO:0007829" key="16">
    <source>
        <dbReference type="PDB" id="1WND"/>
    </source>
</evidence>
<accession>P77674</accession>
<sequence>MQHKLLINGELVSGEGEKQPVYNPATGDVLLEIAEASAEQVDAAVRAADAAFAEWGQTTPKVRAECLLKLADVIEENGQVFAELESRNCGKPLHSAFNDEIPAIVDVFRFFAGAARCLNGLAAGEYLEGHTSMIRRDPLGVVASIAPWNYPLMMAAWKLAPALAAGNCVVLKPSEITPLTALKLAELAKDIFPAGVINILFGRGKTVGDPLTGHPKVRMVSLTGSIATGEHIISHTASSIKRTHMELGGKAPVIVFDDADIEAVVEGVRTFGYYNAGQDCTAACRIYAQKGIYDTLVEKLGAAVATLKSGAPDDESTELGPLSSLAHLERVGKAVEEAKATGHIKVITGGEKRKGNGYYYAPTLLAGALQDDAIVQKEVFGPVVSVTPFDNEEQVVNWANDSQYGLASSVWTKDVGRAHRVSARLQYGCTWVNTHFMLVSEMPHGGQKLSGYGKDMSLYGLEDYTVVRHVMVKH</sequence>
<gene>
    <name evidence="9" type="primary">patD</name>
    <name type="synonym">prr</name>
    <name type="synonym">ydcW</name>
    <name type="ordered locus">b1444</name>
    <name type="ordered locus">JW1439</name>
</gene>
<comment type="function">
    <text evidence="2 3 4 6 7">Catalyzes the oxidation 4-aminobutanal (gamma-aminobutyraldehyde) to 4-aminobutanoate (gamma-aminobutyrate or GABA) (PubMed:16023116, PubMed:3510672). This is the second step in one of two pathways for putrescine degradation, where putrescine is converted into 4-aminobutanoate via 4-aminobutanal, which allows E.coli to grow on putrescine as the sole nitrogen source (PubMed:22636776, PubMed:3510672). Also functions as a 5-aminopentanal dehydrogenase in a a L-lysine degradation pathway to succinate that proceeds via cadaverine, glutarate and L-2-hydroxyglutarate (PubMed:30498244). Can also oxidize n-alkyl medium-chain aldehydes, but with a lower catalytic efficiency (PubMed:15381418, PubMed:16023116).</text>
</comment>
<comment type="catalytic activity">
    <reaction evidence="3 7">
        <text>4-aminobutanal + NAD(+) + H2O = 4-aminobutanoate + NADH + 2 H(+)</text>
        <dbReference type="Rhea" id="RHEA:19105"/>
        <dbReference type="ChEBI" id="CHEBI:15377"/>
        <dbReference type="ChEBI" id="CHEBI:15378"/>
        <dbReference type="ChEBI" id="CHEBI:57540"/>
        <dbReference type="ChEBI" id="CHEBI:57945"/>
        <dbReference type="ChEBI" id="CHEBI:58264"/>
        <dbReference type="ChEBI" id="CHEBI:59888"/>
        <dbReference type="EC" id="1.2.1.19"/>
    </reaction>
    <physiologicalReaction direction="left-to-right" evidence="14">
        <dbReference type="Rhea" id="RHEA:19106"/>
    </physiologicalReaction>
</comment>
<comment type="catalytic activity">
    <reaction evidence="6 12">
        <text>5-aminopentanal + NAD(+) + H2O = 5-aminopentanoate + NADH + 2 H(+)</text>
        <dbReference type="Rhea" id="RHEA:61632"/>
        <dbReference type="ChEBI" id="CHEBI:15377"/>
        <dbReference type="ChEBI" id="CHEBI:15378"/>
        <dbReference type="ChEBI" id="CHEBI:57540"/>
        <dbReference type="ChEBI" id="CHEBI:57945"/>
        <dbReference type="ChEBI" id="CHEBI:144896"/>
        <dbReference type="ChEBI" id="CHEBI:356010"/>
    </reaction>
    <physiologicalReaction direction="left-to-right" evidence="13">
        <dbReference type="Rhea" id="RHEA:61633"/>
    </physiologicalReaction>
</comment>
<comment type="biophysicochemical properties">
    <kinetics>
        <KM evidence="3">41 uM for 4-aminobutanal</KM>
        <KM evidence="3">196 uM for butanal</KM>
        <KM evidence="3">54 uM for NAD(+)</KM>
        <KM evidence="3">484 uM for NADP(+)</KM>
        <KM evidence="7">18 uM for 1-pyrroline</KM>
        <KM evidence="7">37 uM for NAD(+)</KM>
        <Vmax evidence="3">9.08 umol/min/mg enzyme with 4-aminobutanal as substrate</Vmax>
        <Vmax evidence="3">0.36 umol/min/mg enzyme with butanal as substrate</Vmax>
    </kinetics>
    <phDependence>
        <text evidence="7">Optimum pH is 5.4.</text>
    </phDependence>
</comment>
<comment type="pathway">
    <text evidence="4 7">Amine and polyamine degradation; putrescine degradation; 4-aminobutanoate from 4-aminobutanal: step 1/1.</text>
</comment>
<comment type="pathway">
    <text evidence="13">Amino-acid degradation.</text>
</comment>
<comment type="subunit">
    <text evidence="2 3">Homotetramer.</text>
</comment>
<comment type="induction">
    <text evidence="3">Up-regulated under nitrogen starvation conditions.</text>
</comment>
<comment type="disruption phenotype">
    <text evidence="4">Cells lacking this gene show a high decrease in gamma-aminobutyraldehyde dehydrogenase activity, but are still able to grow with putrescine as the sole nitrogen source. However, a mutant lacking both patD and puuC cannot grow with putrescine as the sole nitrogen source.</text>
</comment>
<comment type="biotechnology">
    <text evidence="5">Can be used in the industrial production of the value-added compound 5-aminovalerate.</text>
</comment>
<comment type="miscellaneous">
    <text evidence="6 7">4-aminobutanal can spontaneously cyclize to 1-pyrroline, and 5-aminopentanal to 1-piperideine.</text>
</comment>
<comment type="similarity">
    <text evidence="11">Belongs to the aldehyde dehydrogenase family. Gamma-aminobutyraldehyde dehydrogenase subfamily.</text>
</comment>
<reference key="1">
    <citation type="journal article" date="1996" name="DNA Res.">
        <title>A 570-kb DNA sequence of the Escherichia coli K-12 genome corresponding to the 28.0-40.1 min region on the linkage map.</title>
        <authorList>
            <person name="Aiba H."/>
            <person name="Baba T."/>
            <person name="Fujita K."/>
            <person name="Hayashi K."/>
            <person name="Inada T."/>
            <person name="Isono K."/>
            <person name="Itoh T."/>
            <person name="Kasai H."/>
            <person name="Kashimoto K."/>
            <person name="Kimura S."/>
            <person name="Kitakawa M."/>
            <person name="Kitagawa M."/>
            <person name="Makino K."/>
            <person name="Miki T."/>
            <person name="Mizobuchi K."/>
            <person name="Mori H."/>
            <person name="Mori T."/>
            <person name="Motomura K."/>
            <person name="Nakade S."/>
            <person name="Nakamura Y."/>
            <person name="Nashimoto H."/>
            <person name="Nishio Y."/>
            <person name="Oshima T."/>
            <person name="Saito N."/>
            <person name="Sampei G."/>
            <person name="Seki Y."/>
            <person name="Sivasundaram S."/>
            <person name="Tagami H."/>
            <person name="Takeda J."/>
            <person name="Takemoto K."/>
            <person name="Takeuchi Y."/>
            <person name="Wada C."/>
            <person name="Yamamoto Y."/>
            <person name="Horiuchi T."/>
        </authorList>
    </citation>
    <scope>NUCLEOTIDE SEQUENCE [LARGE SCALE GENOMIC DNA]</scope>
    <source>
        <strain>K12 / W3110 / ATCC 27325 / DSM 5911</strain>
    </source>
</reference>
<reference key="2">
    <citation type="journal article" date="1997" name="Science">
        <title>The complete genome sequence of Escherichia coli K-12.</title>
        <authorList>
            <person name="Blattner F.R."/>
            <person name="Plunkett G. III"/>
            <person name="Bloch C.A."/>
            <person name="Perna N.T."/>
            <person name="Burland V."/>
            <person name="Riley M."/>
            <person name="Collado-Vides J."/>
            <person name="Glasner J.D."/>
            <person name="Rode C.K."/>
            <person name="Mayhew G.F."/>
            <person name="Gregor J."/>
            <person name="Davis N.W."/>
            <person name="Kirkpatrick H.A."/>
            <person name="Goeden M.A."/>
            <person name="Rose D.J."/>
            <person name="Mau B."/>
            <person name="Shao Y."/>
        </authorList>
    </citation>
    <scope>NUCLEOTIDE SEQUENCE [LARGE SCALE GENOMIC DNA]</scope>
    <source>
        <strain>K12 / MG1655 / ATCC 47076</strain>
    </source>
</reference>
<reference key="3">
    <citation type="journal article" date="2006" name="Mol. Syst. Biol.">
        <title>Highly accurate genome sequences of Escherichia coli K-12 strains MG1655 and W3110.</title>
        <authorList>
            <person name="Hayashi K."/>
            <person name="Morooka N."/>
            <person name="Yamamoto Y."/>
            <person name="Fujita K."/>
            <person name="Isono K."/>
            <person name="Choi S."/>
            <person name="Ohtsubo E."/>
            <person name="Baba T."/>
            <person name="Wanner B.L."/>
            <person name="Mori H."/>
            <person name="Horiuchi T."/>
        </authorList>
    </citation>
    <scope>NUCLEOTIDE SEQUENCE [LARGE SCALE GENOMIC DNA]</scope>
    <source>
        <strain>K12 / W3110 / ATCC 27325 / DSM 5911</strain>
    </source>
</reference>
<reference key="4">
    <citation type="journal article" date="1986" name="Biochim. Biophys. Acta">
        <title>A pathway for putrescine catabolism in Escherichia coli.</title>
        <authorList>
            <person name="Prieto-Santos M.I."/>
            <person name="Martin-Checa J."/>
            <person name="Balana-Fouce R."/>
            <person name="Garrido-Pertierra A."/>
        </authorList>
    </citation>
    <scope>FUNCTION</scope>
    <scope>CATALYTIC ACTIVITY</scope>
    <scope>BIOPHYSICOCHEMICAL PROPERTIES</scope>
    <scope>PATHWAY</scope>
</reference>
<reference key="5">
    <citation type="journal article" date="2005" name="FEBS Lett.">
        <title>Identification of Escherichia coli K12 YdcW protein as a gamma-aminobutyraldehyde dehydrogenase.</title>
        <authorList>
            <person name="Samsonova N.N."/>
            <person name="Smirnov S.V."/>
            <person name="Novikova A.E."/>
            <person name="Ptitsyn L.R."/>
        </authorList>
    </citation>
    <scope>FUNCTION</scope>
    <scope>CATALYTIC ACTIVITY</scope>
    <scope>IDENTIFICATION BY MASS SPECTROMETRY</scope>
    <scope>SUBUNIT</scope>
    <scope>INDUCTION</scope>
    <scope>KINETIC PARAMETERS</scope>
    <source>
        <strain>K12 / MG1655 / ATCC 47076</strain>
    </source>
</reference>
<reference key="6">
    <citation type="journal article" date="2012" name="J. Bacteriol.">
        <title>Pathway and enzyme redundancy in putrescine catabolism in Escherichia coli.</title>
        <authorList>
            <person name="Schneider B.L."/>
            <person name="Reitzer L."/>
        </authorList>
    </citation>
    <scope>FUNCTION</scope>
    <scope>PATHWAY</scope>
    <scope>DISRUPTION PHENOTYPE</scope>
    <source>
        <strain>K12 / W3110 / ATCC 27325 / DSM 5911</strain>
    </source>
</reference>
<reference key="7">
    <citation type="journal article" date="2017" name="Bioresour. Technol.">
        <title>A new metabolic route for the fermentative production of 5-aminovalerate from glucose and alternative carbon sources.</title>
        <authorList>
            <person name="Jorge J.M.P."/>
            <person name="Perez-Garcia F."/>
            <person name="Wendisch V.F."/>
        </authorList>
    </citation>
    <scope>BIOTECHNOLOGY</scope>
    <scope>CATALYTIC ACTIVITY</scope>
</reference>
<reference key="8">
    <citation type="journal article" date="2018" name="Nat. Commun.">
        <title>Widespread bacterial lysine degradation proceeding via glutarate and L-2-hydroxyglutarate.</title>
        <authorList>
            <person name="Knorr S."/>
            <person name="Sinn M."/>
            <person name="Galetskiy D."/>
            <person name="Williams R.M."/>
            <person name="Wang C."/>
            <person name="Mueller N."/>
            <person name="Mayans O."/>
            <person name="Schleheck D."/>
            <person name="Hartig J.S."/>
        </authorList>
    </citation>
    <scope>FUNCTION</scope>
    <scope>CATALYTIC ACTIVITY</scope>
    <scope>PATHWAY</scope>
</reference>
<reference key="9">
    <citation type="journal article" date="2004" name="J. Mol. Biol.">
        <title>Crystal structure and kinetics identify Escherichia coli YdcW gene product as a medium-chain aldehyde dehydrogenase.</title>
        <authorList>
            <person name="Gruez A."/>
            <person name="Roig-Zamboni V."/>
            <person name="Grisel S."/>
            <person name="Salomoni A."/>
            <person name="Valencia C."/>
            <person name="Campanacci V."/>
            <person name="Tegoni M."/>
            <person name="Cambillau C."/>
        </authorList>
    </citation>
    <scope>X-RAY CRYSTALLOGRAPHY (2.1 ANGSTROMS) OF APOENZYME AND IN COMPLEX WITH NAD AND BETAINE ALDEHYDE</scope>
    <scope>FUNCTION</scope>
    <scope>SUBUNIT</scope>
</reference>
<organism>
    <name type="scientific">Escherichia coli (strain K12)</name>
    <dbReference type="NCBI Taxonomy" id="83333"/>
    <lineage>
        <taxon>Bacteria</taxon>
        <taxon>Pseudomonadati</taxon>
        <taxon>Pseudomonadota</taxon>
        <taxon>Gammaproteobacteria</taxon>
        <taxon>Enterobacterales</taxon>
        <taxon>Enterobacteriaceae</taxon>
        <taxon>Escherichia</taxon>
    </lineage>
</organism>